<gene>
    <name evidence="1" type="primary">rpoC</name>
    <name type="ordered locus">RT0130</name>
</gene>
<organism>
    <name type="scientific">Rickettsia typhi (strain ATCC VR-144 / Wilmington)</name>
    <dbReference type="NCBI Taxonomy" id="257363"/>
    <lineage>
        <taxon>Bacteria</taxon>
        <taxon>Pseudomonadati</taxon>
        <taxon>Pseudomonadota</taxon>
        <taxon>Alphaproteobacteria</taxon>
        <taxon>Rickettsiales</taxon>
        <taxon>Rickettsiaceae</taxon>
        <taxon>Rickettsieae</taxon>
        <taxon>Rickettsia</taxon>
        <taxon>typhus group</taxon>
    </lineage>
</organism>
<sequence>MSVVNFYGQLSNTQQFDQIRINIASPDQVRSWSFGEVTKPETINYRTFKPEKDGLFCARIFGPVKDYECLCGKYKRMKNRGITCEKCGVEVTVSRVRRERMGHIELAAPVAHIWFLKSLPSRISTLLDMTMRDVEKILYFENYVVVDPGLSILQKGELLTEEELQKAKDKYGEDAFTASIGAEVIQQMLKELDFSKLKQELYDELHITSSEVKKKKLVKRLKLVEDFLESENKPEWMIMDVLPVIPPEIRPLVMLDGGRFATSDLNELYRRVINRNNRLKKLIESKAPDIIVRNEKRMLQEAVDALFDNGRRGRAAKNANKRPFKSLSDMLKGKQGRFRQNLLGKRVDYSGRSVIVVGPELKLHQCGLPKKMALELFKPFIYSKLELYGIATTIKAAKRMVEAEKPEVWDVLEEVIREHPVLLNRAPTLHRLGIQAFEPLLIEGKAIQLHPLVCAAFNADFDGDQMAVHIPLSIEAQLEARVFMMSTNNILSPANGRPIIVPDKDIVLGLYYLTIAFDNEVGEGMMFSDLAEMEHALYNKFITIHTKIKYRRDQLNAEGKMVPVIIDTTYGRLMVGELLPSNPNIEFKCINKQLTKKDISLVIDLVYRHCGQKATVIFADQLMKLGFKYACSSGISFGMDDMVVPESKSTHINETQLEIKEFEQQYSNGLITYGEKYNKVVDAWSRCTDRVANDMMKEIATPPINDYPNHQRINAIYMMAISGARGSFQQIKQLGGMRGLMTKSNGQIIQTPIISNFKEGLTEFECFNSANGMRKGQIDTALKTASSGYLTRKLVDVAQDCIITEKDCGTDKGIEVKSVIEGGEIIVPLAEKILGRTAAIDIFHPVTNDLILNKGELINESKLEQIESAGLDRIMIKSVLTCESSTGICSICYGRDLATGTLVSEGEAIGVIAAQSIGEPGTQLTMRTFHIGGAATKGAEVSSVEASYDAKVKIISRNVVINSEERKIVMSRNCELLLLDDNGNEKARHKIPYGARLLVDDGDIVIKTQKLAEWDPYTIPIITEKSGKVLFKDMVEGISIRDVTDEATGIPSKVIIESKQYSRGAELRPRIQLLDSKGEVITLSNGLEARYYLPVGAVLSVEDGIQISVGDIIARIPKESTTTKDITGGLPRVAELVEARRPKDHAVIAEVDGRVEFGKDYKSKRRIIIHPIDGTLSIEYMVPKGKHVVVNEGDFVKKGDLLIDGNPVLQDILKVMGVEVLANYIVKEVQAVYRLQGVKIDDKHIEVIIRQMLQKVEVTDSGGTTLLVGEKIDRHEFDEINEKAMKNGLKPAEAQLILQGITKASLQTRSFISAASFQETTRVLTEAAIAGKVDKLRGLKENVIVGRLVPAGTGYFMDKMRKAAVKLDEENV</sequence>
<dbReference type="EC" id="2.7.7.6" evidence="1"/>
<dbReference type="EMBL" id="AE017197">
    <property type="protein sequence ID" value="AAU03615.1"/>
    <property type="molecule type" value="Genomic_DNA"/>
</dbReference>
<dbReference type="RefSeq" id="WP_011190602.1">
    <property type="nucleotide sequence ID" value="NC_006142.1"/>
</dbReference>
<dbReference type="SMR" id="Q68XM7"/>
<dbReference type="KEGG" id="rty:RT0130"/>
<dbReference type="eggNOG" id="COG0086">
    <property type="taxonomic scope" value="Bacteria"/>
</dbReference>
<dbReference type="HOGENOM" id="CLU_000524_3_1_5"/>
<dbReference type="OrthoDB" id="9815296at2"/>
<dbReference type="Proteomes" id="UP000000604">
    <property type="component" value="Chromosome"/>
</dbReference>
<dbReference type="GO" id="GO:0000428">
    <property type="term" value="C:DNA-directed RNA polymerase complex"/>
    <property type="evidence" value="ECO:0007669"/>
    <property type="project" value="UniProtKB-KW"/>
</dbReference>
<dbReference type="GO" id="GO:0003677">
    <property type="term" value="F:DNA binding"/>
    <property type="evidence" value="ECO:0007669"/>
    <property type="project" value="UniProtKB-UniRule"/>
</dbReference>
<dbReference type="GO" id="GO:0003899">
    <property type="term" value="F:DNA-directed RNA polymerase activity"/>
    <property type="evidence" value="ECO:0007669"/>
    <property type="project" value="UniProtKB-UniRule"/>
</dbReference>
<dbReference type="GO" id="GO:0000287">
    <property type="term" value="F:magnesium ion binding"/>
    <property type="evidence" value="ECO:0007669"/>
    <property type="project" value="UniProtKB-UniRule"/>
</dbReference>
<dbReference type="GO" id="GO:0008270">
    <property type="term" value="F:zinc ion binding"/>
    <property type="evidence" value="ECO:0007669"/>
    <property type="project" value="UniProtKB-UniRule"/>
</dbReference>
<dbReference type="GO" id="GO:0006351">
    <property type="term" value="P:DNA-templated transcription"/>
    <property type="evidence" value="ECO:0007669"/>
    <property type="project" value="UniProtKB-UniRule"/>
</dbReference>
<dbReference type="CDD" id="cd02655">
    <property type="entry name" value="RNAP_beta'_C"/>
    <property type="match status" value="1"/>
</dbReference>
<dbReference type="CDD" id="cd01609">
    <property type="entry name" value="RNAP_beta'_N"/>
    <property type="match status" value="1"/>
</dbReference>
<dbReference type="FunFam" id="1.10.150.390:FF:000002">
    <property type="entry name" value="DNA-directed RNA polymerase subunit beta"/>
    <property type="match status" value="1"/>
</dbReference>
<dbReference type="Gene3D" id="1.10.132.30">
    <property type="match status" value="1"/>
</dbReference>
<dbReference type="Gene3D" id="1.10.150.390">
    <property type="match status" value="1"/>
</dbReference>
<dbReference type="Gene3D" id="1.10.1790.20">
    <property type="match status" value="1"/>
</dbReference>
<dbReference type="Gene3D" id="1.10.40.90">
    <property type="match status" value="1"/>
</dbReference>
<dbReference type="Gene3D" id="2.40.40.20">
    <property type="match status" value="1"/>
</dbReference>
<dbReference type="Gene3D" id="2.40.50.100">
    <property type="match status" value="3"/>
</dbReference>
<dbReference type="Gene3D" id="4.10.860.120">
    <property type="entry name" value="RNA polymerase II, clamp domain"/>
    <property type="match status" value="1"/>
</dbReference>
<dbReference type="Gene3D" id="1.10.274.100">
    <property type="entry name" value="RNA polymerase Rpb1, domain 3"/>
    <property type="match status" value="1"/>
</dbReference>
<dbReference type="HAMAP" id="MF_01322">
    <property type="entry name" value="RNApol_bact_RpoC"/>
    <property type="match status" value="1"/>
</dbReference>
<dbReference type="InterPro" id="IPR045867">
    <property type="entry name" value="DNA-dir_RpoC_beta_prime"/>
</dbReference>
<dbReference type="InterPro" id="IPR012754">
    <property type="entry name" value="DNA-dir_RpoC_beta_prime_bact"/>
</dbReference>
<dbReference type="InterPro" id="IPR000722">
    <property type="entry name" value="RNA_pol_asu"/>
</dbReference>
<dbReference type="InterPro" id="IPR006592">
    <property type="entry name" value="RNA_pol_N"/>
</dbReference>
<dbReference type="InterPro" id="IPR007080">
    <property type="entry name" value="RNA_pol_Rpb1_1"/>
</dbReference>
<dbReference type="InterPro" id="IPR007066">
    <property type="entry name" value="RNA_pol_Rpb1_3"/>
</dbReference>
<dbReference type="InterPro" id="IPR042102">
    <property type="entry name" value="RNA_pol_Rpb1_3_sf"/>
</dbReference>
<dbReference type="InterPro" id="IPR007083">
    <property type="entry name" value="RNA_pol_Rpb1_4"/>
</dbReference>
<dbReference type="InterPro" id="IPR007081">
    <property type="entry name" value="RNA_pol_Rpb1_5"/>
</dbReference>
<dbReference type="InterPro" id="IPR044893">
    <property type="entry name" value="RNA_pol_Rpb1_clamp_domain"/>
</dbReference>
<dbReference type="InterPro" id="IPR038120">
    <property type="entry name" value="Rpb1_funnel_sf"/>
</dbReference>
<dbReference type="NCBIfam" id="TIGR02386">
    <property type="entry name" value="rpoC_TIGR"/>
    <property type="match status" value="1"/>
</dbReference>
<dbReference type="PANTHER" id="PTHR19376">
    <property type="entry name" value="DNA-DIRECTED RNA POLYMERASE"/>
    <property type="match status" value="1"/>
</dbReference>
<dbReference type="PANTHER" id="PTHR19376:SF54">
    <property type="entry name" value="DNA-DIRECTED RNA POLYMERASE SUBUNIT BETA"/>
    <property type="match status" value="1"/>
</dbReference>
<dbReference type="Pfam" id="PF04997">
    <property type="entry name" value="RNA_pol_Rpb1_1"/>
    <property type="match status" value="1"/>
</dbReference>
<dbReference type="Pfam" id="PF00623">
    <property type="entry name" value="RNA_pol_Rpb1_2"/>
    <property type="match status" value="2"/>
</dbReference>
<dbReference type="Pfam" id="PF04983">
    <property type="entry name" value="RNA_pol_Rpb1_3"/>
    <property type="match status" value="1"/>
</dbReference>
<dbReference type="Pfam" id="PF05000">
    <property type="entry name" value="RNA_pol_Rpb1_4"/>
    <property type="match status" value="1"/>
</dbReference>
<dbReference type="Pfam" id="PF04998">
    <property type="entry name" value="RNA_pol_Rpb1_5"/>
    <property type="match status" value="1"/>
</dbReference>
<dbReference type="SMART" id="SM00663">
    <property type="entry name" value="RPOLA_N"/>
    <property type="match status" value="1"/>
</dbReference>
<dbReference type="SUPFAM" id="SSF64484">
    <property type="entry name" value="beta and beta-prime subunits of DNA dependent RNA-polymerase"/>
    <property type="match status" value="1"/>
</dbReference>
<reference key="1">
    <citation type="journal article" date="2004" name="J. Bacteriol.">
        <title>Complete genome sequence of Rickettsia typhi and comparison with sequences of other Rickettsiae.</title>
        <authorList>
            <person name="McLeod M.P."/>
            <person name="Qin X."/>
            <person name="Karpathy S.E."/>
            <person name="Gioia J."/>
            <person name="Highlander S.K."/>
            <person name="Fox G.E."/>
            <person name="McNeill T.Z."/>
            <person name="Jiang H."/>
            <person name="Muzny D."/>
            <person name="Jacob L.S."/>
            <person name="Hawes A.C."/>
            <person name="Sodergren E."/>
            <person name="Gill R."/>
            <person name="Hume J."/>
            <person name="Morgan M."/>
            <person name="Fan G."/>
            <person name="Amin A.G."/>
            <person name="Gibbs R.A."/>
            <person name="Hong C."/>
            <person name="Yu X.-J."/>
            <person name="Walker D.H."/>
            <person name="Weinstock G.M."/>
        </authorList>
    </citation>
    <scope>NUCLEOTIDE SEQUENCE [LARGE SCALE GENOMIC DNA]</scope>
    <source>
        <strain>ATCC VR-144 / Wilmington</strain>
    </source>
</reference>
<comment type="function">
    <text evidence="1">DNA-dependent RNA polymerase catalyzes the transcription of DNA into RNA using the four ribonucleoside triphosphates as substrates.</text>
</comment>
<comment type="catalytic activity">
    <reaction evidence="1">
        <text>RNA(n) + a ribonucleoside 5'-triphosphate = RNA(n+1) + diphosphate</text>
        <dbReference type="Rhea" id="RHEA:21248"/>
        <dbReference type="Rhea" id="RHEA-COMP:14527"/>
        <dbReference type="Rhea" id="RHEA-COMP:17342"/>
        <dbReference type="ChEBI" id="CHEBI:33019"/>
        <dbReference type="ChEBI" id="CHEBI:61557"/>
        <dbReference type="ChEBI" id="CHEBI:140395"/>
        <dbReference type="EC" id="2.7.7.6"/>
    </reaction>
</comment>
<comment type="cofactor">
    <cofactor evidence="1">
        <name>Mg(2+)</name>
        <dbReference type="ChEBI" id="CHEBI:18420"/>
    </cofactor>
    <text evidence="1">Binds 1 Mg(2+) ion per subunit.</text>
</comment>
<comment type="cofactor">
    <cofactor evidence="1">
        <name>Zn(2+)</name>
        <dbReference type="ChEBI" id="CHEBI:29105"/>
    </cofactor>
    <text evidence="1">Binds 2 Zn(2+) ions per subunit.</text>
</comment>
<comment type="subunit">
    <text evidence="1">The RNAP catalytic core consists of 2 alpha, 1 beta, 1 beta' and 1 omega subunit. When a sigma factor is associated with the core the holoenzyme is formed, which can initiate transcription.</text>
</comment>
<comment type="similarity">
    <text evidence="1">Belongs to the RNA polymerase beta' chain family.</text>
</comment>
<evidence type="ECO:0000255" key="1">
    <source>
        <dbReference type="HAMAP-Rule" id="MF_01322"/>
    </source>
</evidence>
<feature type="chain" id="PRO_0000225574" description="DNA-directed RNA polymerase subunit beta'">
    <location>
        <begin position="1"/>
        <end position="1372"/>
    </location>
</feature>
<feature type="binding site" evidence="1">
    <location>
        <position position="69"/>
    </location>
    <ligand>
        <name>Zn(2+)</name>
        <dbReference type="ChEBI" id="CHEBI:29105"/>
        <label>1</label>
    </ligand>
</feature>
<feature type="binding site" evidence="1">
    <location>
        <position position="71"/>
    </location>
    <ligand>
        <name>Zn(2+)</name>
        <dbReference type="ChEBI" id="CHEBI:29105"/>
        <label>1</label>
    </ligand>
</feature>
<feature type="binding site" evidence="1">
    <location>
        <position position="84"/>
    </location>
    <ligand>
        <name>Zn(2+)</name>
        <dbReference type="ChEBI" id="CHEBI:29105"/>
        <label>1</label>
    </ligand>
</feature>
<feature type="binding site" evidence="1">
    <location>
        <position position="87"/>
    </location>
    <ligand>
        <name>Zn(2+)</name>
        <dbReference type="ChEBI" id="CHEBI:29105"/>
        <label>1</label>
    </ligand>
</feature>
<feature type="binding site" evidence="1">
    <location>
        <position position="460"/>
    </location>
    <ligand>
        <name>Mg(2+)</name>
        <dbReference type="ChEBI" id="CHEBI:18420"/>
    </ligand>
</feature>
<feature type="binding site" evidence="1">
    <location>
        <position position="462"/>
    </location>
    <ligand>
        <name>Mg(2+)</name>
        <dbReference type="ChEBI" id="CHEBI:18420"/>
    </ligand>
</feature>
<feature type="binding site" evidence="1">
    <location>
        <position position="464"/>
    </location>
    <ligand>
        <name>Mg(2+)</name>
        <dbReference type="ChEBI" id="CHEBI:18420"/>
    </ligand>
</feature>
<feature type="binding site" evidence="1">
    <location>
        <position position="808"/>
    </location>
    <ligand>
        <name>Zn(2+)</name>
        <dbReference type="ChEBI" id="CHEBI:29105"/>
        <label>2</label>
    </ligand>
</feature>
<feature type="binding site" evidence="1">
    <location>
        <position position="882"/>
    </location>
    <ligand>
        <name>Zn(2+)</name>
        <dbReference type="ChEBI" id="CHEBI:29105"/>
        <label>2</label>
    </ligand>
</feature>
<feature type="binding site" evidence="1">
    <location>
        <position position="889"/>
    </location>
    <ligand>
        <name>Zn(2+)</name>
        <dbReference type="ChEBI" id="CHEBI:29105"/>
        <label>2</label>
    </ligand>
</feature>
<feature type="binding site" evidence="1">
    <location>
        <position position="892"/>
    </location>
    <ligand>
        <name>Zn(2+)</name>
        <dbReference type="ChEBI" id="CHEBI:29105"/>
        <label>2</label>
    </ligand>
</feature>
<accession>Q68XM7</accession>
<proteinExistence type="inferred from homology"/>
<keyword id="KW-0240">DNA-directed RNA polymerase</keyword>
<keyword id="KW-0460">Magnesium</keyword>
<keyword id="KW-0479">Metal-binding</keyword>
<keyword id="KW-0548">Nucleotidyltransferase</keyword>
<keyword id="KW-0804">Transcription</keyword>
<keyword id="KW-0808">Transferase</keyword>
<keyword id="KW-0862">Zinc</keyword>
<protein>
    <recommendedName>
        <fullName evidence="1">DNA-directed RNA polymerase subunit beta'</fullName>
        <shortName evidence="1">RNAP subunit beta'</shortName>
        <ecNumber evidence="1">2.7.7.6</ecNumber>
    </recommendedName>
    <alternativeName>
        <fullName evidence="1">RNA polymerase subunit beta'</fullName>
    </alternativeName>
    <alternativeName>
        <fullName evidence="1">Transcriptase subunit beta'</fullName>
    </alternativeName>
</protein>
<name>RPOC_RICTY</name>